<reference key="1">
    <citation type="journal article" date="2000" name="Plant Physiol.">
        <title>Exploiting secondary growth in Arabidopsis. Construction of xylem and bark cDNA libraries and cloning of three xylem endopeptidases.</title>
        <authorList>
            <person name="Zhao C."/>
            <person name="Johnson B.J."/>
            <person name="Kositsup B."/>
            <person name="Beers E.P."/>
        </authorList>
    </citation>
    <scope>NUCLEOTIDE SEQUENCE [MRNA]</scope>
    <scope>TISSUE SPECIFICITY</scope>
    <source>
        <strain>cv. Columbia</strain>
        <tissue>Xylem</tissue>
    </source>
</reference>
<reference key="2">
    <citation type="journal article" date="1999" name="Nature">
        <title>Sequence and analysis of chromosome 4 of the plant Arabidopsis thaliana.</title>
        <authorList>
            <person name="Mayer K.F.X."/>
            <person name="Schueller C."/>
            <person name="Wambutt R."/>
            <person name="Murphy G."/>
            <person name="Volckaert G."/>
            <person name="Pohl T."/>
            <person name="Duesterhoeft A."/>
            <person name="Stiekema W."/>
            <person name="Entian K.-D."/>
            <person name="Terryn N."/>
            <person name="Harris B."/>
            <person name="Ansorge W."/>
            <person name="Brandt P."/>
            <person name="Grivell L.A."/>
            <person name="Rieger M."/>
            <person name="Weichselgartner M."/>
            <person name="de Simone V."/>
            <person name="Obermaier B."/>
            <person name="Mache R."/>
            <person name="Mueller M."/>
            <person name="Kreis M."/>
            <person name="Delseny M."/>
            <person name="Puigdomenech P."/>
            <person name="Watson M."/>
            <person name="Schmidtheini T."/>
            <person name="Reichert B."/>
            <person name="Portetelle D."/>
            <person name="Perez-Alonso M."/>
            <person name="Boutry M."/>
            <person name="Bancroft I."/>
            <person name="Vos P."/>
            <person name="Hoheisel J."/>
            <person name="Zimmermann W."/>
            <person name="Wedler H."/>
            <person name="Ridley P."/>
            <person name="Langham S.-A."/>
            <person name="McCullagh B."/>
            <person name="Bilham L."/>
            <person name="Robben J."/>
            <person name="van der Schueren J."/>
            <person name="Grymonprez B."/>
            <person name="Chuang Y.-J."/>
            <person name="Vandenbussche F."/>
            <person name="Braeken M."/>
            <person name="Weltjens I."/>
            <person name="Voet M."/>
            <person name="Bastiaens I."/>
            <person name="Aert R."/>
            <person name="Defoor E."/>
            <person name="Weitzenegger T."/>
            <person name="Bothe G."/>
            <person name="Ramsperger U."/>
            <person name="Hilbert H."/>
            <person name="Braun M."/>
            <person name="Holzer E."/>
            <person name="Brandt A."/>
            <person name="Peters S."/>
            <person name="van Staveren M."/>
            <person name="Dirkse W."/>
            <person name="Mooijman P."/>
            <person name="Klein Lankhorst R."/>
            <person name="Rose M."/>
            <person name="Hauf J."/>
            <person name="Koetter P."/>
            <person name="Berneiser S."/>
            <person name="Hempel S."/>
            <person name="Feldpausch M."/>
            <person name="Lamberth S."/>
            <person name="Van den Daele H."/>
            <person name="De Keyser A."/>
            <person name="Buysshaert C."/>
            <person name="Gielen J."/>
            <person name="Villarroel R."/>
            <person name="De Clercq R."/>
            <person name="van Montagu M."/>
            <person name="Rogers J."/>
            <person name="Cronin A."/>
            <person name="Quail M.A."/>
            <person name="Bray-Allen S."/>
            <person name="Clark L."/>
            <person name="Doggett J."/>
            <person name="Hall S."/>
            <person name="Kay M."/>
            <person name="Lennard N."/>
            <person name="McLay K."/>
            <person name="Mayes R."/>
            <person name="Pettett A."/>
            <person name="Rajandream M.A."/>
            <person name="Lyne M."/>
            <person name="Benes V."/>
            <person name="Rechmann S."/>
            <person name="Borkova D."/>
            <person name="Bloecker H."/>
            <person name="Scharfe M."/>
            <person name="Grimm M."/>
            <person name="Loehnert T.-H."/>
            <person name="Dose S."/>
            <person name="de Haan M."/>
            <person name="Maarse A.C."/>
            <person name="Schaefer M."/>
            <person name="Mueller-Auer S."/>
            <person name="Gabel C."/>
            <person name="Fuchs M."/>
            <person name="Fartmann B."/>
            <person name="Granderath K."/>
            <person name="Dauner D."/>
            <person name="Herzl A."/>
            <person name="Neumann S."/>
            <person name="Argiriou A."/>
            <person name="Vitale D."/>
            <person name="Liguori R."/>
            <person name="Piravandi E."/>
            <person name="Massenet O."/>
            <person name="Quigley F."/>
            <person name="Clabauld G."/>
            <person name="Muendlein A."/>
            <person name="Felber R."/>
            <person name="Schnabl S."/>
            <person name="Hiller R."/>
            <person name="Schmidt W."/>
            <person name="Lecharny A."/>
            <person name="Aubourg S."/>
            <person name="Chefdor F."/>
            <person name="Cooke R."/>
            <person name="Berger C."/>
            <person name="Monfort A."/>
            <person name="Casacuberta E."/>
            <person name="Gibbons T."/>
            <person name="Weber N."/>
            <person name="Vandenbol M."/>
            <person name="Bargues M."/>
            <person name="Terol J."/>
            <person name="Torres A."/>
            <person name="Perez-Perez A."/>
            <person name="Purnelle B."/>
            <person name="Bent E."/>
            <person name="Johnson S."/>
            <person name="Tacon D."/>
            <person name="Jesse T."/>
            <person name="Heijnen L."/>
            <person name="Schwarz S."/>
            <person name="Scholler P."/>
            <person name="Heber S."/>
            <person name="Francs P."/>
            <person name="Bielke C."/>
            <person name="Frishman D."/>
            <person name="Haase D."/>
            <person name="Lemcke K."/>
            <person name="Mewes H.-W."/>
            <person name="Stocker S."/>
            <person name="Zaccaria P."/>
            <person name="Bevan M."/>
            <person name="Wilson R.K."/>
            <person name="de la Bastide M."/>
            <person name="Habermann K."/>
            <person name="Parnell L."/>
            <person name="Dedhia N."/>
            <person name="Gnoj L."/>
            <person name="Schutz K."/>
            <person name="Huang E."/>
            <person name="Spiegel L."/>
            <person name="Sekhon M."/>
            <person name="Murray J."/>
            <person name="Sheet P."/>
            <person name="Cordes M."/>
            <person name="Abu-Threideh J."/>
            <person name="Stoneking T."/>
            <person name="Kalicki J."/>
            <person name="Graves T."/>
            <person name="Harmon G."/>
            <person name="Edwards J."/>
            <person name="Latreille P."/>
            <person name="Courtney L."/>
            <person name="Cloud J."/>
            <person name="Abbott A."/>
            <person name="Scott K."/>
            <person name="Johnson D."/>
            <person name="Minx P."/>
            <person name="Bentley D."/>
            <person name="Fulton B."/>
            <person name="Miller N."/>
            <person name="Greco T."/>
            <person name="Kemp K."/>
            <person name="Kramer J."/>
            <person name="Fulton L."/>
            <person name="Mardis E."/>
            <person name="Dante M."/>
            <person name="Pepin K."/>
            <person name="Hillier L.W."/>
            <person name="Nelson J."/>
            <person name="Spieth J."/>
            <person name="Ryan E."/>
            <person name="Andrews S."/>
            <person name="Geisel C."/>
            <person name="Layman D."/>
            <person name="Du H."/>
            <person name="Ali J."/>
            <person name="Berghoff A."/>
            <person name="Jones K."/>
            <person name="Drone K."/>
            <person name="Cotton M."/>
            <person name="Joshu C."/>
            <person name="Antonoiu B."/>
            <person name="Zidanic M."/>
            <person name="Strong C."/>
            <person name="Sun H."/>
            <person name="Lamar B."/>
            <person name="Yordan C."/>
            <person name="Ma P."/>
            <person name="Zhong J."/>
            <person name="Preston R."/>
            <person name="Vil D."/>
            <person name="Shekher M."/>
            <person name="Matero A."/>
            <person name="Shah R."/>
            <person name="Swaby I.K."/>
            <person name="O'Shaughnessy A."/>
            <person name="Rodriguez M."/>
            <person name="Hoffman J."/>
            <person name="Till S."/>
            <person name="Granat S."/>
            <person name="Shohdy N."/>
            <person name="Hasegawa A."/>
            <person name="Hameed A."/>
            <person name="Lodhi M."/>
            <person name="Johnson A."/>
            <person name="Chen E."/>
            <person name="Marra M.A."/>
            <person name="Martienssen R."/>
            <person name="McCombie W.R."/>
        </authorList>
    </citation>
    <scope>NUCLEOTIDE SEQUENCE [LARGE SCALE GENOMIC DNA]</scope>
    <source>
        <strain>cv. Columbia</strain>
    </source>
</reference>
<reference key="3">
    <citation type="journal article" date="2017" name="Plant J.">
        <title>Araport11: a complete reannotation of the Arabidopsis thaliana reference genome.</title>
        <authorList>
            <person name="Cheng C.Y."/>
            <person name="Krishnakumar V."/>
            <person name="Chan A.P."/>
            <person name="Thibaud-Nissen F."/>
            <person name="Schobel S."/>
            <person name="Town C.D."/>
        </authorList>
    </citation>
    <scope>GENOME REANNOTATION</scope>
    <source>
        <strain>cv. Columbia</strain>
    </source>
</reference>
<reference key="4">
    <citation type="journal article" date="2005" name="PLoS Comput. Biol.">
        <title>Inferring hypotheses on functional relationships of genes: Analysis of the Arabidopsis thaliana subtilase gene family.</title>
        <authorList>
            <person name="Rautengarten C."/>
            <person name="Steinhauser D."/>
            <person name="Bussis D."/>
            <person name="Stintzi A."/>
            <person name="Schaller A."/>
            <person name="Kopka J."/>
            <person name="Altmann T."/>
        </authorList>
    </citation>
    <scope>GENE FAMILY</scope>
    <scope>NOMENCLATURE</scope>
</reference>
<protein>
    <recommendedName>
        <fullName evidence="6">Subtilisin-like protease SBT4.14</fullName>
        <ecNumber evidence="7">3.4.21.-</ecNumber>
    </recommendedName>
    <alternativeName>
        <fullName>Cucumisin-like protein</fullName>
    </alternativeName>
    <alternativeName>
        <fullName evidence="6">Subtilase subfamily 4 member 14</fullName>
        <shortName evidence="6">AtSBT4.14</shortName>
    </alternativeName>
    <alternativeName>
        <fullName evidence="5">Xylem serine proteinase 1</fullName>
        <shortName evidence="5">AtXSP1</shortName>
    </alternativeName>
</protein>
<keyword id="KW-0068">Autocatalytic cleavage</keyword>
<keyword id="KW-0325">Glycoprotein</keyword>
<keyword id="KW-0378">Hydrolase</keyword>
<keyword id="KW-0645">Protease</keyword>
<keyword id="KW-1185">Reference proteome</keyword>
<keyword id="KW-0720">Serine protease</keyword>
<keyword id="KW-0732">Signal</keyword>
<keyword id="KW-0865">Zymogen</keyword>
<proteinExistence type="evidence at transcript level"/>
<accession>Q9LLL8</accession>
<accession>O81324</accession>
<gene>
    <name evidence="6" type="primary">SBT4.14</name>
    <name evidence="5" type="synonym">XSP1</name>
    <name type="ordered locus">At4g00230</name>
    <name type="ORF">F6N15.3</name>
</gene>
<evidence type="ECO:0000250" key="1"/>
<evidence type="ECO:0000255" key="2"/>
<evidence type="ECO:0000255" key="3">
    <source>
        <dbReference type="PROSITE-ProRule" id="PRU01240"/>
    </source>
</evidence>
<evidence type="ECO:0000269" key="4">
    <source>
    </source>
</evidence>
<evidence type="ECO:0000303" key="5">
    <source>
    </source>
</evidence>
<evidence type="ECO:0000303" key="6">
    <source>
    </source>
</evidence>
<evidence type="ECO:0000305" key="7"/>
<sequence>MIRSKCSCHHHLLVLVMVVLWISPRYASAEDEHAKDFYIIYLGDRPDNTEETIKTHINLLSSLNISQEEAKERKVYSYTKAFNAFAAKLSPHEAKKMMEMEEVVSVSRNQYRKLHTTKSWDFVGLPLTAKRHLKAERDVIIGVLDTGITPDSESFLDHGLGPPPAKWKGSCGPYKNFTGCNNKIIGAKYFKHDGNVPAGEVRSPIDIDGHGTHTSSTVAGVLVANASLYGIANGTARGAVPSARLAMYKVCWARSGCADMDILAGFEAAIHDGVEIISISIGGPIADYSSDSISVGSFHAMRKGILTVASAGNDGPSSGTVTNHEPWILTVAASGIDRTFKSKIDLGNGKSFSGMGISMFSPKAKSYPLVSGVDAAKNTDDKYLARYCFSDSLDRKKVKGKVMVCRMGGGGVESTIKSYGGAGAIIVSDQYLDNAQIFMAPATSVNSSVGDIIYRYINSTRSASAVIQKTRQVTIPAPFVASFSSRGPNPGSIRLLKPDIAAPGIDILAAFTLKRSLTGLDGDTQFSKFTILSGTSMACPHVAGVAAYVKSFHPDWTPAAIKSAIITSAKPISRRVNKDAEFAYGGGQINPRRAASPGLVYDMDDISYVQFLCGEGYNATTLAPLVGTRSVSCSSIVPGLGHDSLNYPTIQLTLRSAKTSTLAVFRRRVTNVGPPSSVYTATVRAPKGVEITVEPQSLSFSKASQKRSFKVVVKAKQMTPGKIVSGLLVWKSPRHSVRSPIVIYSPTSD</sequence>
<feature type="signal peptide" evidence="2">
    <location>
        <begin position="1"/>
        <end position="28"/>
    </location>
</feature>
<feature type="propeptide" id="PRO_0000027202" description="Activation peptide" evidence="1">
    <location>
        <begin position="29"/>
        <end position="115"/>
    </location>
</feature>
<feature type="chain" id="PRO_0000027203" description="Subtilisin-like protease SBT4.14">
    <location>
        <begin position="116"/>
        <end status="unknown"/>
    </location>
</feature>
<feature type="propeptide" id="PRO_0000027204" evidence="1">
    <location>
        <begin status="unknown"/>
        <end position="749"/>
    </location>
</feature>
<feature type="domain" description="Inhibitor I9" evidence="2">
    <location>
        <begin position="38"/>
        <end position="115"/>
    </location>
</feature>
<feature type="domain" description="Peptidase S8" evidence="3">
    <location>
        <begin position="119"/>
        <end position="595"/>
    </location>
</feature>
<feature type="active site" description="Charge relay system" evidence="3">
    <location>
        <position position="145"/>
    </location>
</feature>
<feature type="active site" description="Charge relay system" evidence="3">
    <location>
        <position position="210"/>
    </location>
</feature>
<feature type="active site" description="Charge relay system" evidence="3">
    <location>
        <position position="536"/>
    </location>
</feature>
<feature type="glycosylation site" description="N-linked (GlcNAc...) asparagine" evidence="2">
    <location>
        <position position="176"/>
    </location>
</feature>
<feature type="glycosylation site" description="N-linked (GlcNAc...) asparagine" evidence="2">
    <location>
        <position position="225"/>
    </location>
</feature>
<feature type="glycosylation site" description="N-linked (GlcNAc...) asparagine" evidence="2">
    <location>
        <position position="233"/>
    </location>
</feature>
<feature type="glycosylation site" description="N-linked (GlcNAc...) asparagine" evidence="2">
    <location>
        <position position="446"/>
    </location>
</feature>
<feature type="glycosylation site" description="N-linked (GlcNAc...) asparagine" evidence="2">
    <location>
        <position position="458"/>
    </location>
</feature>
<feature type="glycosylation site" description="N-linked (GlcNAc...) asparagine" evidence="2">
    <location>
        <position position="618"/>
    </location>
</feature>
<dbReference type="EC" id="3.4.21.-" evidence="7"/>
<dbReference type="EMBL" id="AF190794">
    <property type="protein sequence ID" value="AAF25830.1"/>
    <property type="molecule type" value="mRNA"/>
</dbReference>
<dbReference type="EMBL" id="AF069299">
    <property type="protein sequence ID" value="AAC19302.1"/>
    <property type="status" value="ALT_SEQ"/>
    <property type="molecule type" value="Genomic_DNA"/>
</dbReference>
<dbReference type="EMBL" id="AL161471">
    <property type="protein sequence ID" value="CAB80781.1"/>
    <property type="status" value="ALT_SEQ"/>
    <property type="molecule type" value="Genomic_DNA"/>
</dbReference>
<dbReference type="EMBL" id="CP002687">
    <property type="protein sequence ID" value="AEE81840.1"/>
    <property type="molecule type" value="Genomic_DNA"/>
</dbReference>
<dbReference type="PIR" id="T01351">
    <property type="entry name" value="T01351"/>
</dbReference>
<dbReference type="RefSeq" id="NP_567155.1">
    <property type="nucleotide sequence ID" value="NM_116240.5"/>
</dbReference>
<dbReference type="SMR" id="Q9LLL8"/>
<dbReference type="FunCoup" id="Q9LLL8">
    <property type="interactions" value="42"/>
</dbReference>
<dbReference type="STRING" id="3702.Q9LLL8"/>
<dbReference type="MEROPS" id="S08.A14"/>
<dbReference type="GlyCosmos" id="Q9LLL8">
    <property type="glycosylation" value="6 sites, No reported glycans"/>
</dbReference>
<dbReference type="GlyGen" id="Q9LLL8">
    <property type="glycosylation" value="6 sites"/>
</dbReference>
<dbReference type="iPTMnet" id="Q9LLL8"/>
<dbReference type="PaxDb" id="3702-AT4G00230.1"/>
<dbReference type="ProteomicsDB" id="232736"/>
<dbReference type="EnsemblPlants" id="AT4G00230.1">
    <property type="protein sequence ID" value="AT4G00230.1"/>
    <property type="gene ID" value="AT4G00230"/>
</dbReference>
<dbReference type="GeneID" id="827949"/>
<dbReference type="Gramene" id="AT4G00230.1">
    <property type="protein sequence ID" value="AT4G00230.1"/>
    <property type="gene ID" value="AT4G00230"/>
</dbReference>
<dbReference type="KEGG" id="ath:AT4G00230"/>
<dbReference type="Araport" id="AT4G00230"/>
<dbReference type="TAIR" id="AT4G00230">
    <property type="gene designation" value="XSP1"/>
</dbReference>
<dbReference type="eggNOG" id="ENOG502QRA7">
    <property type="taxonomic scope" value="Eukaryota"/>
</dbReference>
<dbReference type="HOGENOM" id="CLU_000625_4_3_1"/>
<dbReference type="InParanoid" id="Q9LLL8"/>
<dbReference type="OMA" id="LCHEGYK"/>
<dbReference type="PhylomeDB" id="Q9LLL8"/>
<dbReference type="PRO" id="PR:Q9LLL8"/>
<dbReference type="Proteomes" id="UP000006548">
    <property type="component" value="Chromosome 4"/>
</dbReference>
<dbReference type="ExpressionAtlas" id="Q9LLL8">
    <property type="expression patterns" value="baseline and differential"/>
</dbReference>
<dbReference type="GO" id="GO:0004252">
    <property type="term" value="F:serine-type endopeptidase activity"/>
    <property type="evidence" value="ECO:0007669"/>
    <property type="project" value="InterPro"/>
</dbReference>
<dbReference type="GO" id="GO:0006508">
    <property type="term" value="P:proteolysis"/>
    <property type="evidence" value="ECO:0007669"/>
    <property type="project" value="UniProtKB-KW"/>
</dbReference>
<dbReference type="CDD" id="cd02120">
    <property type="entry name" value="PA_subtilisin_like"/>
    <property type="match status" value="1"/>
</dbReference>
<dbReference type="CDD" id="cd04852">
    <property type="entry name" value="Peptidases_S8_3"/>
    <property type="match status" value="1"/>
</dbReference>
<dbReference type="FunFam" id="2.60.40.2310:FF:000001">
    <property type="entry name" value="Subtilisin-like protease SBT1.5"/>
    <property type="match status" value="1"/>
</dbReference>
<dbReference type="FunFam" id="3.40.50.200:FF:000006">
    <property type="entry name" value="Subtilisin-like protease SBT1.5"/>
    <property type="match status" value="1"/>
</dbReference>
<dbReference type="FunFam" id="3.50.30.30:FF:000039">
    <property type="entry name" value="Subtilisin-like protease SBT3"/>
    <property type="match status" value="1"/>
</dbReference>
<dbReference type="FunFam" id="3.30.70.80:FF:000002">
    <property type="entry name" value="Subtilisin-like protease SBT5.3"/>
    <property type="match status" value="1"/>
</dbReference>
<dbReference type="Gene3D" id="2.60.40.2310">
    <property type="match status" value="1"/>
</dbReference>
<dbReference type="Gene3D" id="3.50.30.30">
    <property type="match status" value="1"/>
</dbReference>
<dbReference type="Gene3D" id="3.30.70.80">
    <property type="entry name" value="Peptidase S8 propeptide/proteinase inhibitor I9"/>
    <property type="match status" value="1"/>
</dbReference>
<dbReference type="Gene3D" id="3.40.50.200">
    <property type="entry name" value="Peptidase S8/S53 domain"/>
    <property type="match status" value="1"/>
</dbReference>
<dbReference type="InterPro" id="IPR000209">
    <property type="entry name" value="Peptidase_S8/S53_dom"/>
</dbReference>
<dbReference type="InterPro" id="IPR036852">
    <property type="entry name" value="Peptidase_S8/S53_dom_sf"/>
</dbReference>
<dbReference type="InterPro" id="IPR023828">
    <property type="entry name" value="Peptidase_S8_Ser-AS"/>
</dbReference>
<dbReference type="InterPro" id="IPR015500">
    <property type="entry name" value="Peptidase_S8_subtilisin-rel"/>
</dbReference>
<dbReference type="InterPro" id="IPR034197">
    <property type="entry name" value="Peptidases_S8_3"/>
</dbReference>
<dbReference type="InterPro" id="IPR010259">
    <property type="entry name" value="S8pro/Inhibitor_I9"/>
</dbReference>
<dbReference type="InterPro" id="IPR037045">
    <property type="entry name" value="S8pro/Inhibitor_I9_sf"/>
</dbReference>
<dbReference type="InterPro" id="IPR045051">
    <property type="entry name" value="SBT"/>
</dbReference>
<dbReference type="InterPro" id="IPR041469">
    <property type="entry name" value="Subtilisin-like_FN3"/>
</dbReference>
<dbReference type="PANTHER" id="PTHR10795">
    <property type="entry name" value="PROPROTEIN CONVERTASE SUBTILISIN/KEXIN"/>
    <property type="match status" value="1"/>
</dbReference>
<dbReference type="Pfam" id="PF17766">
    <property type="entry name" value="fn3_6"/>
    <property type="match status" value="1"/>
</dbReference>
<dbReference type="Pfam" id="PF05922">
    <property type="entry name" value="Inhibitor_I9"/>
    <property type="match status" value="1"/>
</dbReference>
<dbReference type="Pfam" id="PF00082">
    <property type="entry name" value="Peptidase_S8"/>
    <property type="match status" value="1"/>
</dbReference>
<dbReference type="PRINTS" id="PR00723">
    <property type="entry name" value="SUBTILISIN"/>
</dbReference>
<dbReference type="SUPFAM" id="SSF52743">
    <property type="entry name" value="Subtilisin-like"/>
    <property type="match status" value="1"/>
</dbReference>
<dbReference type="PROSITE" id="PS51892">
    <property type="entry name" value="SUBTILASE"/>
    <property type="match status" value="1"/>
</dbReference>
<dbReference type="PROSITE" id="PS00136">
    <property type="entry name" value="SUBTILASE_ASP"/>
    <property type="match status" value="1"/>
</dbReference>
<dbReference type="PROSITE" id="PS00138">
    <property type="entry name" value="SUBTILASE_SER"/>
    <property type="match status" value="1"/>
</dbReference>
<name>SBT4E_ARATH</name>
<organism>
    <name type="scientific">Arabidopsis thaliana</name>
    <name type="common">Mouse-ear cress</name>
    <dbReference type="NCBI Taxonomy" id="3702"/>
    <lineage>
        <taxon>Eukaryota</taxon>
        <taxon>Viridiplantae</taxon>
        <taxon>Streptophyta</taxon>
        <taxon>Embryophyta</taxon>
        <taxon>Tracheophyta</taxon>
        <taxon>Spermatophyta</taxon>
        <taxon>Magnoliopsida</taxon>
        <taxon>eudicotyledons</taxon>
        <taxon>Gunneridae</taxon>
        <taxon>Pentapetalae</taxon>
        <taxon>rosids</taxon>
        <taxon>malvids</taxon>
        <taxon>Brassicales</taxon>
        <taxon>Brassicaceae</taxon>
        <taxon>Camelineae</taxon>
        <taxon>Arabidopsis</taxon>
    </lineage>
</organism>
<comment type="tissue specificity">
    <text evidence="4">Expressed only in roots, particularly in xylem.</text>
</comment>
<comment type="PTM">
    <text evidence="1">The C-terminal propeptide is autocleaved.</text>
</comment>
<comment type="similarity">
    <text evidence="7">Belongs to the peptidase S8 family.</text>
</comment>
<comment type="sequence caution" evidence="7">
    <conflict type="erroneous gene model prediction">
        <sequence resource="EMBL-CDS" id="AAC19302"/>
    </conflict>
</comment>
<comment type="sequence caution" evidence="7">
    <conflict type="erroneous gene model prediction">
        <sequence resource="EMBL-CDS" id="CAB80781"/>
    </conflict>
</comment>